<sequence>MSPVLSESQLRDFKHTLESSKIPFRSEVRLGILSSFKIGGVCPVIVEPEISSQVSEILHIFSKFDIPWKILGGGSNLLISDHPDNFVTLRLSGKFKEFVSLGDGKFKIGAATNTTPTFRQISQLGYTGAEFLSTIPGWTGGAVIQNAGCYGGELFDLIESVEFLRNGEMFVRKPSEIKYGYRFTEFLNQKDSIILGIEILLKEGNLEEIESSLKDKRDRRNSSQPENKKSAGSVFKNPKVFREDGKEIKAWELLDQAGLRGQIKGGAQISPEHCNFIVNLGTATASDVHYLIDLVVDRVYQTSGILLNREIEFFGDIP</sequence>
<feature type="chain" id="PRO_0000179224" description="UDP-N-acetylenolpyruvoylglucosamine reductase">
    <location>
        <begin position="1"/>
        <end position="318"/>
    </location>
</feature>
<feature type="domain" description="FAD-binding PCMH-type" evidence="1">
    <location>
        <begin position="38"/>
        <end position="204"/>
    </location>
</feature>
<feature type="region of interest" description="Disordered" evidence="2">
    <location>
        <begin position="212"/>
        <end position="232"/>
    </location>
</feature>
<feature type="compositionally biased region" description="Basic and acidic residues" evidence="2">
    <location>
        <begin position="212"/>
        <end position="229"/>
    </location>
</feature>
<feature type="active site" evidence="1">
    <location>
        <position position="182"/>
    </location>
</feature>
<feature type="active site" description="Proton donor" evidence="1">
    <location>
        <position position="233"/>
    </location>
</feature>
<feature type="active site" evidence="1">
    <location>
        <position position="310"/>
    </location>
</feature>
<proteinExistence type="inferred from homology"/>
<evidence type="ECO:0000255" key="1">
    <source>
        <dbReference type="HAMAP-Rule" id="MF_00037"/>
    </source>
</evidence>
<evidence type="ECO:0000256" key="2">
    <source>
        <dbReference type="SAM" id="MobiDB-lite"/>
    </source>
</evidence>
<evidence type="ECO:0000305" key="3"/>
<gene>
    <name evidence="1" type="primary">murB</name>
    <name type="ordered locus">LA_3930</name>
</gene>
<organism>
    <name type="scientific">Leptospira interrogans serogroup Icterohaemorrhagiae serovar Lai (strain 56601)</name>
    <dbReference type="NCBI Taxonomy" id="189518"/>
    <lineage>
        <taxon>Bacteria</taxon>
        <taxon>Pseudomonadati</taxon>
        <taxon>Spirochaetota</taxon>
        <taxon>Spirochaetia</taxon>
        <taxon>Leptospirales</taxon>
        <taxon>Leptospiraceae</taxon>
        <taxon>Leptospira</taxon>
    </lineage>
</organism>
<dbReference type="EC" id="1.3.1.98" evidence="1"/>
<dbReference type="EMBL" id="AE010300">
    <property type="protein sequence ID" value="AAN51128.1"/>
    <property type="status" value="ALT_INIT"/>
    <property type="molecule type" value="Genomic_DNA"/>
</dbReference>
<dbReference type="RefSeq" id="NP_714110.1">
    <property type="nucleotide sequence ID" value="NC_004342.2"/>
</dbReference>
<dbReference type="RefSeq" id="WP_002163532.1">
    <property type="nucleotide sequence ID" value="NC_004342.2"/>
</dbReference>
<dbReference type="SMR" id="Q8EZC5"/>
<dbReference type="FunCoup" id="Q8EZC5">
    <property type="interactions" value="417"/>
</dbReference>
<dbReference type="STRING" id="189518.LA_3930"/>
<dbReference type="PaxDb" id="189518-LA_3930"/>
<dbReference type="EnsemblBacteria" id="AAN51128">
    <property type="protein sequence ID" value="AAN51128"/>
    <property type="gene ID" value="LA_3930"/>
</dbReference>
<dbReference type="KEGG" id="lil:LA_3930"/>
<dbReference type="PATRIC" id="fig|189518.3.peg.3896"/>
<dbReference type="HOGENOM" id="CLU_035304_1_1_12"/>
<dbReference type="InParanoid" id="Q8EZC5"/>
<dbReference type="OrthoDB" id="9804753at2"/>
<dbReference type="UniPathway" id="UPA00219"/>
<dbReference type="Proteomes" id="UP000001408">
    <property type="component" value="Chromosome I"/>
</dbReference>
<dbReference type="GO" id="GO:0005829">
    <property type="term" value="C:cytosol"/>
    <property type="evidence" value="ECO:0000318"/>
    <property type="project" value="GO_Central"/>
</dbReference>
<dbReference type="GO" id="GO:0071949">
    <property type="term" value="F:FAD binding"/>
    <property type="evidence" value="ECO:0007669"/>
    <property type="project" value="InterPro"/>
</dbReference>
<dbReference type="GO" id="GO:0050660">
    <property type="term" value="F:flavin adenine dinucleotide binding"/>
    <property type="evidence" value="ECO:0000318"/>
    <property type="project" value="GO_Central"/>
</dbReference>
<dbReference type="GO" id="GO:0008762">
    <property type="term" value="F:UDP-N-acetylmuramate dehydrogenase activity"/>
    <property type="evidence" value="ECO:0000318"/>
    <property type="project" value="GO_Central"/>
</dbReference>
<dbReference type="GO" id="GO:0051301">
    <property type="term" value="P:cell division"/>
    <property type="evidence" value="ECO:0007669"/>
    <property type="project" value="UniProtKB-KW"/>
</dbReference>
<dbReference type="GO" id="GO:0071555">
    <property type="term" value="P:cell wall organization"/>
    <property type="evidence" value="ECO:0000318"/>
    <property type="project" value="GO_Central"/>
</dbReference>
<dbReference type="GO" id="GO:0009252">
    <property type="term" value="P:peptidoglycan biosynthetic process"/>
    <property type="evidence" value="ECO:0007669"/>
    <property type="project" value="UniProtKB-UniRule"/>
</dbReference>
<dbReference type="GO" id="GO:0008360">
    <property type="term" value="P:regulation of cell shape"/>
    <property type="evidence" value="ECO:0007669"/>
    <property type="project" value="UniProtKB-KW"/>
</dbReference>
<dbReference type="Gene3D" id="3.30.465.10">
    <property type="match status" value="1"/>
</dbReference>
<dbReference type="Gene3D" id="3.90.78.10">
    <property type="entry name" value="UDP-N-acetylenolpyruvoylglucosamine reductase, C-terminal domain"/>
    <property type="match status" value="1"/>
</dbReference>
<dbReference type="Gene3D" id="3.30.43.10">
    <property type="entry name" value="Uridine Diphospho-n-acetylenolpyruvylglucosamine Reductase, domain 2"/>
    <property type="match status" value="1"/>
</dbReference>
<dbReference type="HAMAP" id="MF_00037">
    <property type="entry name" value="MurB"/>
    <property type="match status" value="1"/>
</dbReference>
<dbReference type="InterPro" id="IPR016166">
    <property type="entry name" value="FAD-bd_PCMH"/>
</dbReference>
<dbReference type="InterPro" id="IPR036318">
    <property type="entry name" value="FAD-bd_PCMH-like_sf"/>
</dbReference>
<dbReference type="InterPro" id="IPR016167">
    <property type="entry name" value="FAD-bd_PCMH_sub1"/>
</dbReference>
<dbReference type="InterPro" id="IPR016169">
    <property type="entry name" value="FAD-bd_PCMH_sub2"/>
</dbReference>
<dbReference type="InterPro" id="IPR003170">
    <property type="entry name" value="MurB"/>
</dbReference>
<dbReference type="InterPro" id="IPR011601">
    <property type="entry name" value="MurB_C"/>
</dbReference>
<dbReference type="InterPro" id="IPR036635">
    <property type="entry name" value="MurB_C_sf"/>
</dbReference>
<dbReference type="InterPro" id="IPR006094">
    <property type="entry name" value="Oxid_FAD_bind_N"/>
</dbReference>
<dbReference type="NCBIfam" id="TIGR00179">
    <property type="entry name" value="murB"/>
    <property type="match status" value="1"/>
</dbReference>
<dbReference type="NCBIfam" id="NF010480">
    <property type="entry name" value="PRK13905.1"/>
    <property type="match status" value="1"/>
</dbReference>
<dbReference type="PANTHER" id="PTHR21071">
    <property type="entry name" value="UDP-N-ACETYLENOLPYRUVOYLGLUCOSAMINE REDUCTASE"/>
    <property type="match status" value="1"/>
</dbReference>
<dbReference type="PANTHER" id="PTHR21071:SF4">
    <property type="entry name" value="UDP-N-ACETYLENOLPYRUVOYLGLUCOSAMINE REDUCTASE"/>
    <property type="match status" value="1"/>
</dbReference>
<dbReference type="Pfam" id="PF01565">
    <property type="entry name" value="FAD_binding_4"/>
    <property type="match status" value="1"/>
</dbReference>
<dbReference type="Pfam" id="PF02873">
    <property type="entry name" value="MurB_C"/>
    <property type="match status" value="1"/>
</dbReference>
<dbReference type="SUPFAM" id="SSF56176">
    <property type="entry name" value="FAD-binding/transporter-associated domain-like"/>
    <property type="match status" value="1"/>
</dbReference>
<dbReference type="SUPFAM" id="SSF56194">
    <property type="entry name" value="Uridine diphospho-N-Acetylenolpyruvylglucosamine reductase, MurB, C-terminal domain"/>
    <property type="match status" value="1"/>
</dbReference>
<dbReference type="PROSITE" id="PS51387">
    <property type="entry name" value="FAD_PCMH"/>
    <property type="match status" value="1"/>
</dbReference>
<protein>
    <recommendedName>
        <fullName evidence="1">UDP-N-acetylenolpyruvoylglucosamine reductase</fullName>
        <ecNumber evidence="1">1.3.1.98</ecNumber>
    </recommendedName>
    <alternativeName>
        <fullName evidence="1">UDP-N-acetylmuramate dehydrogenase</fullName>
    </alternativeName>
</protein>
<keyword id="KW-0131">Cell cycle</keyword>
<keyword id="KW-0132">Cell division</keyword>
<keyword id="KW-0133">Cell shape</keyword>
<keyword id="KW-0961">Cell wall biogenesis/degradation</keyword>
<keyword id="KW-0963">Cytoplasm</keyword>
<keyword id="KW-0274">FAD</keyword>
<keyword id="KW-0285">Flavoprotein</keyword>
<keyword id="KW-0521">NADP</keyword>
<keyword id="KW-0560">Oxidoreductase</keyword>
<keyword id="KW-0573">Peptidoglycan synthesis</keyword>
<keyword id="KW-1185">Reference proteome</keyword>
<reference key="1">
    <citation type="journal article" date="2003" name="Nature">
        <title>Unique physiological and pathogenic features of Leptospira interrogans revealed by whole-genome sequencing.</title>
        <authorList>
            <person name="Ren S.-X."/>
            <person name="Fu G."/>
            <person name="Jiang X.-G."/>
            <person name="Zeng R."/>
            <person name="Miao Y.-G."/>
            <person name="Xu H."/>
            <person name="Zhang Y.-X."/>
            <person name="Xiong H."/>
            <person name="Lu G."/>
            <person name="Lu L.-F."/>
            <person name="Jiang H.-Q."/>
            <person name="Jia J."/>
            <person name="Tu Y.-F."/>
            <person name="Jiang J.-X."/>
            <person name="Gu W.-Y."/>
            <person name="Zhang Y.-Q."/>
            <person name="Cai Z."/>
            <person name="Sheng H.-H."/>
            <person name="Yin H.-F."/>
            <person name="Zhang Y."/>
            <person name="Zhu G.-F."/>
            <person name="Wan M."/>
            <person name="Huang H.-L."/>
            <person name="Qian Z."/>
            <person name="Wang S.-Y."/>
            <person name="Ma W."/>
            <person name="Yao Z.-J."/>
            <person name="Shen Y."/>
            <person name="Qiang B.-Q."/>
            <person name="Xia Q.-C."/>
            <person name="Guo X.-K."/>
            <person name="Danchin A."/>
            <person name="Saint Girons I."/>
            <person name="Somerville R.L."/>
            <person name="Wen Y.-M."/>
            <person name="Shi M.-H."/>
            <person name="Chen Z."/>
            <person name="Xu J.-G."/>
            <person name="Zhao G.-P."/>
        </authorList>
    </citation>
    <scope>NUCLEOTIDE SEQUENCE [LARGE SCALE GENOMIC DNA]</scope>
    <source>
        <strain>56601</strain>
    </source>
</reference>
<accession>Q8EZC5</accession>
<comment type="function">
    <text evidence="1">Cell wall formation.</text>
</comment>
<comment type="catalytic activity">
    <reaction evidence="1">
        <text>UDP-N-acetyl-alpha-D-muramate + NADP(+) = UDP-N-acetyl-3-O-(1-carboxyvinyl)-alpha-D-glucosamine + NADPH + H(+)</text>
        <dbReference type="Rhea" id="RHEA:12248"/>
        <dbReference type="ChEBI" id="CHEBI:15378"/>
        <dbReference type="ChEBI" id="CHEBI:57783"/>
        <dbReference type="ChEBI" id="CHEBI:58349"/>
        <dbReference type="ChEBI" id="CHEBI:68483"/>
        <dbReference type="ChEBI" id="CHEBI:70757"/>
        <dbReference type="EC" id="1.3.1.98"/>
    </reaction>
</comment>
<comment type="cofactor">
    <cofactor evidence="1">
        <name>FAD</name>
        <dbReference type="ChEBI" id="CHEBI:57692"/>
    </cofactor>
</comment>
<comment type="pathway">
    <text evidence="1">Cell wall biogenesis; peptidoglycan biosynthesis.</text>
</comment>
<comment type="subcellular location">
    <subcellularLocation>
        <location evidence="1">Cytoplasm</location>
    </subcellularLocation>
</comment>
<comment type="similarity">
    <text evidence="1">Belongs to the MurB family.</text>
</comment>
<comment type="sequence caution" evidence="3">
    <conflict type="erroneous initiation">
        <sequence resource="EMBL-CDS" id="AAN51128"/>
    </conflict>
</comment>
<name>MURB_LEPIN</name>